<name>GLYA_METS5</name>
<protein>
    <recommendedName>
        <fullName evidence="1">Serine hydroxymethyltransferase</fullName>
        <shortName evidence="1">SHMT</shortName>
        <shortName evidence="1">Serine methylase</shortName>
        <ecNumber evidence="1">2.1.2.-</ecNumber>
    </recommendedName>
</protein>
<proteinExistence type="inferred from homology"/>
<gene>
    <name evidence="1" type="primary">glyA</name>
    <name type="ordered locus">Msed_1650</name>
</gene>
<accession>A4YHA3</accession>
<comment type="function">
    <text evidence="1">Catalyzes the reversible interconversion of serine and glycine with a modified folate serving as the one-carbon carrier. Also exhibits a pteridine-independent aldolase activity toward beta-hydroxyamino acids, producing glycine and aldehydes, via a retro-aldol mechanism.</text>
</comment>
<comment type="cofactor">
    <cofactor evidence="1">
        <name>pyridoxal 5'-phosphate</name>
        <dbReference type="ChEBI" id="CHEBI:597326"/>
    </cofactor>
</comment>
<comment type="pathway">
    <text evidence="1">Amino-acid biosynthesis; glycine biosynthesis; glycine from L-serine: step 1/1.</text>
</comment>
<comment type="subunit">
    <text evidence="1">Homodimer.</text>
</comment>
<comment type="subcellular location">
    <subcellularLocation>
        <location evidence="1">Cytoplasm</location>
    </subcellularLocation>
</comment>
<comment type="similarity">
    <text evidence="1">Belongs to the SHMT family.</text>
</comment>
<reference key="1">
    <citation type="journal article" date="2008" name="Appl. Environ. Microbiol.">
        <title>The genome sequence of the metal-mobilizing, extremely thermoacidophilic archaeon Metallosphaera sedula provides insights into bioleaching-associated metabolism.</title>
        <authorList>
            <person name="Auernik K.S."/>
            <person name="Maezato Y."/>
            <person name="Blum P.H."/>
            <person name="Kelly R.M."/>
        </authorList>
    </citation>
    <scope>NUCLEOTIDE SEQUENCE [LARGE SCALE GENOMIC DNA]</scope>
    <source>
        <strain>ATCC 51363 / DSM 5348 / JCM 9185 / NBRC 15509 / TH2</strain>
    </source>
</reference>
<dbReference type="EC" id="2.1.2.-" evidence="1"/>
<dbReference type="EMBL" id="CP000682">
    <property type="protein sequence ID" value="ABP95805.1"/>
    <property type="molecule type" value="Genomic_DNA"/>
</dbReference>
<dbReference type="RefSeq" id="WP_012021592.1">
    <property type="nucleotide sequence ID" value="NC_009440.1"/>
</dbReference>
<dbReference type="SMR" id="A4YHA3"/>
<dbReference type="STRING" id="399549.Msed_1650"/>
<dbReference type="GeneID" id="91756158"/>
<dbReference type="KEGG" id="mse:Msed_1650"/>
<dbReference type="eggNOG" id="arCOG00070">
    <property type="taxonomic scope" value="Archaea"/>
</dbReference>
<dbReference type="HOGENOM" id="CLU_022477_2_1_2"/>
<dbReference type="UniPathway" id="UPA00288">
    <property type="reaction ID" value="UER01023"/>
</dbReference>
<dbReference type="Proteomes" id="UP000000242">
    <property type="component" value="Chromosome"/>
</dbReference>
<dbReference type="GO" id="GO:0005737">
    <property type="term" value="C:cytoplasm"/>
    <property type="evidence" value="ECO:0007669"/>
    <property type="project" value="UniProtKB-SubCell"/>
</dbReference>
<dbReference type="GO" id="GO:0004372">
    <property type="term" value="F:glycine hydroxymethyltransferase activity"/>
    <property type="evidence" value="ECO:0007669"/>
    <property type="project" value="UniProtKB-UniRule"/>
</dbReference>
<dbReference type="GO" id="GO:0030170">
    <property type="term" value="F:pyridoxal phosphate binding"/>
    <property type="evidence" value="ECO:0007669"/>
    <property type="project" value="UniProtKB-UniRule"/>
</dbReference>
<dbReference type="GO" id="GO:0019264">
    <property type="term" value="P:glycine biosynthetic process from serine"/>
    <property type="evidence" value="ECO:0007669"/>
    <property type="project" value="UniProtKB-UniRule"/>
</dbReference>
<dbReference type="GO" id="GO:0035999">
    <property type="term" value="P:tetrahydrofolate interconversion"/>
    <property type="evidence" value="ECO:0007669"/>
    <property type="project" value="InterPro"/>
</dbReference>
<dbReference type="CDD" id="cd00378">
    <property type="entry name" value="SHMT"/>
    <property type="match status" value="1"/>
</dbReference>
<dbReference type="FunFam" id="3.40.640.10:FF:000101">
    <property type="entry name" value="Serine hydroxymethyltransferase"/>
    <property type="match status" value="1"/>
</dbReference>
<dbReference type="FunFam" id="3.90.1150.10:FF:000114">
    <property type="entry name" value="Serine hydroxymethyltransferase"/>
    <property type="match status" value="1"/>
</dbReference>
<dbReference type="Gene3D" id="3.90.1150.10">
    <property type="entry name" value="Aspartate Aminotransferase, domain 1"/>
    <property type="match status" value="1"/>
</dbReference>
<dbReference type="Gene3D" id="3.40.640.10">
    <property type="entry name" value="Type I PLP-dependent aspartate aminotransferase-like (Major domain)"/>
    <property type="match status" value="1"/>
</dbReference>
<dbReference type="HAMAP" id="MF_00051">
    <property type="entry name" value="SHMT"/>
    <property type="match status" value="1"/>
</dbReference>
<dbReference type="InterPro" id="IPR015424">
    <property type="entry name" value="PyrdxlP-dep_Trfase"/>
</dbReference>
<dbReference type="InterPro" id="IPR015421">
    <property type="entry name" value="PyrdxlP-dep_Trfase_major"/>
</dbReference>
<dbReference type="InterPro" id="IPR015422">
    <property type="entry name" value="PyrdxlP-dep_Trfase_small"/>
</dbReference>
<dbReference type="InterPro" id="IPR001085">
    <property type="entry name" value="Ser_HO-MeTrfase"/>
</dbReference>
<dbReference type="InterPro" id="IPR049943">
    <property type="entry name" value="Ser_HO-MeTrfase-like"/>
</dbReference>
<dbReference type="InterPro" id="IPR039429">
    <property type="entry name" value="SHMT-like_dom"/>
</dbReference>
<dbReference type="NCBIfam" id="NF000586">
    <property type="entry name" value="PRK00011.1"/>
    <property type="match status" value="1"/>
</dbReference>
<dbReference type="PANTHER" id="PTHR11680">
    <property type="entry name" value="SERINE HYDROXYMETHYLTRANSFERASE"/>
    <property type="match status" value="1"/>
</dbReference>
<dbReference type="PANTHER" id="PTHR11680:SF35">
    <property type="entry name" value="SERINE HYDROXYMETHYLTRANSFERASE 1"/>
    <property type="match status" value="1"/>
</dbReference>
<dbReference type="Pfam" id="PF00464">
    <property type="entry name" value="SHMT"/>
    <property type="match status" value="1"/>
</dbReference>
<dbReference type="PIRSF" id="PIRSF000412">
    <property type="entry name" value="SHMT"/>
    <property type="match status" value="1"/>
</dbReference>
<dbReference type="SUPFAM" id="SSF53383">
    <property type="entry name" value="PLP-dependent transferases"/>
    <property type="match status" value="1"/>
</dbReference>
<keyword id="KW-0028">Amino-acid biosynthesis</keyword>
<keyword id="KW-0963">Cytoplasm</keyword>
<keyword id="KW-0554">One-carbon metabolism</keyword>
<keyword id="KW-0663">Pyridoxal phosphate</keyword>
<keyword id="KW-1185">Reference proteome</keyword>
<keyword id="KW-0808">Transferase</keyword>
<feature type="chain" id="PRO_0000369969" description="Serine hydroxymethyltransferase">
    <location>
        <begin position="1"/>
        <end position="431"/>
    </location>
</feature>
<feature type="binding site" evidence="1">
    <location>
        <begin position="121"/>
        <end position="123"/>
    </location>
    <ligand>
        <name>(6S)-5,6,7,8-tetrahydrofolate</name>
        <dbReference type="ChEBI" id="CHEBI:57453"/>
    </ligand>
</feature>
<feature type="site" description="Plays an important role in substrate specificity" evidence="1">
    <location>
        <position position="226"/>
    </location>
</feature>
<feature type="modified residue" description="N6-(pyridoxal phosphate)lysine" evidence="1">
    <location>
        <position position="227"/>
    </location>
</feature>
<organism>
    <name type="scientific">Metallosphaera sedula (strain ATCC 51363 / DSM 5348 / JCM 9185 / NBRC 15509 / TH2)</name>
    <dbReference type="NCBI Taxonomy" id="399549"/>
    <lineage>
        <taxon>Archaea</taxon>
        <taxon>Thermoproteota</taxon>
        <taxon>Thermoprotei</taxon>
        <taxon>Sulfolobales</taxon>
        <taxon>Sulfolobaceae</taxon>
        <taxon>Metallosphaera</taxon>
    </lineage>
</organism>
<sequence length="431" mass="48305">MDVQKELEKVIELTRSQNRWRRTETINLIASENVMSPLAEALYMSDFMSRYAEGKPFKRFYQGTKYVDEVETLAMDYMNQVTGSKFCDLRPTSGTLANAAVFRVLANPGDKALIAPVQAGAHVSHTKFGTLGALGIEHIEMPYDEENMNVDVDRAVKMIEQIKPKFVVLGGSLYLFPHPTKDLAPHVHSVGAKLVYDAAHVYGLMTGKVWSNPLDEGADFLNVSTHKTFPGPQGGAIFSNEEEEFKKVSRTIFPWFVSNHHLHRLPSTAVTALEMKVYGEDYAKQITRNSKALAEALASFGFKVIGEHLGYTKSHQVAVDVKNLGGGAYVAKTLESANIIVNKNLLPHDPPEAVNDPSGIRIGVQEMTRFGMKEGEMEEIAELMKQILVDKRDINEMRRKVTEMRSRFLEVKYALTYDLSKYNSKLIPMIL</sequence>
<evidence type="ECO:0000255" key="1">
    <source>
        <dbReference type="HAMAP-Rule" id="MF_00051"/>
    </source>
</evidence>